<protein>
    <recommendedName>
        <fullName evidence="1">Ribosome-recycling factor</fullName>
        <shortName evidence="1">RRF</shortName>
    </recommendedName>
    <alternativeName>
        <fullName evidence="1">Ribosome-releasing factor</fullName>
    </alternativeName>
</protein>
<proteinExistence type="inferred from homology"/>
<accession>O82853</accession>
<name>RRF_PSEAE</name>
<comment type="function">
    <text evidence="1 2">Responsible for the release of ribosomes from messenger RNA at the termination of protein biosynthesis. May increase the efficiency of translation by recycling ribosomes from one round of translation to another.</text>
</comment>
<comment type="subcellular location">
    <subcellularLocation>
        <location evidence="1">Cytoplasm</location>
    </subcellularLocation>
</comment>
<comment type="similarity">
    <text evidence="1">Belongs to the RRF family.</text>
</comment>
<dbReference type="EMBL" id="AB010087">
    <property type="protein sequence ID" value="BAA32345.1"/>
    <property type="molecule type" value="Genomic_DNA"/>
</dbReference>
<dbReference type="EMBL" id="AE004091">
    <property type="protein sequence ID" value="AAG07041.1"/>
    <property type="molecule type" value="Genomic_DNA"/>
</dbReference>
<dbReference type="PIR" id="H83188">
    <property type="entry name" value="H83188"/>
</dbReference>
<dbReference type="RefSeq" id="NP_252343.1">
    <property type="nucleotide sequence ID" value="NC_002516.2"/>
</dbReference>
<dbReference type="RefSeq" id="WP_003092390.1">
    <property type="nucleotide sequence ID" value="NZ_QZGE01000001.1"/>
</dbReference>
<dbReference type="BMRB" id="O82853"/>
<dbReference type="SMR" id="O82853"/>
<dbReference type="FunCoup" id="O82853">
    <property type="interactions" value="718"/>
</dbReference>
<dbReference type="STRING" id="208964.PA3653"/>
<dbReference type="PaxDb" id="208964-PA3653"/>
<dbReference type="GeneID" id="880554"/>
<dbReference type="KEGG" id="pae:PA3653"/>
<dbReference type="PATRIC" id="fig|208964.12.peg.3822"/>
<dbReference type="PseudoCAP" id="PA3653"/>
<dbReference type="HOGENOM" id="CLU_073981_2_1_6"/>
<dbReference type="InParanoid" id="O82853"/>
<dbReference type="OrthoDB" id="9804006at2"/>
<dbReference type="PhylomeDB" id="O82853"/>
<dbReference type="BioCyc" id="PAER208964:G1FZ6-3723-MONOMER"/>
<dbReference type="Proteomes" id="UP000002438">
    <property type="component" value="Chromosome"/>
</dbReference>
<dbReference type="GO" id="GO:0005737">
    <property type="term" value="C:cytoplasm"/>
    <property type="evidence" value="ECO:0000318"/>
    <property type="project" value="GO_Central"/>
</dbReference>
<dbReference type="GO" id="GO:0005829">
    <property type="term" value="C:cytosol"/>
    <property type="evidence" value="ECO:0007669"/>
    <property type="project" value="GOC"/>
</dbReference>
<dbReference type="GO" id="GO:0043023">
    <property type="term" value="F:ribosomal large subunit binding"/>
    <property type="evidence" value="ECO:0000318"/>
    <property type="project" value="GO_Central"/>
</dbReference>
<dbReference type="GO" id="GO:0002184">
    <property type="term" value="P:cytoplasmic translational termination"/>
    <property type="evidence" value="ECO:0000318"/>
    <property type="project" value="GO_Central"/>
</dbReference>
<dbReference type="GO" id="GO:0006412">
    <property type="term" value="P:translation"/>
    <property type="evidence" value="ECO:0000314"/>
    <property type="project" value="PseudoCAP"/>
</dbReference>
<dbReference type="CDD" id="cd00520">
    <property type="entry name" value="RRF"/>
    <property type="match status" value="1"/>
</dbReference>
<dbReference type="FunFam" id="1.10.132.20:FF:000001">
    <property type="entry name" value="Ribosome-recycling factor"/>
    <property type="match status" value="1"/>
</dbReference>
<dbReference type="FunFam" id="3.30.1360.40:FF:000001">
    <property type="entry name" value="Ribosome-recycling factor"/>
    <property type="match status" value="1"/>
</dbReference>
<dbReference type="Gene3D" id="3.30.1360.40">
    <property type="match status" value="1"/>
</dbReference>
<dbReference type="Gene3D" id="1.10.132.20">
    <property type="entry name" value="Ribosome-recycling factor"/>
    <property type="match status" value="1"/>
</dbReference>
<dbReference type="HAMAP" id="MF_00040">
    <property type="entry name" value="RRF"/>
    <property type="match status" value="1"/>
</dbReference>
<dbReference type="InterPro" id="IPR002661">
    <property type="entry name" value="Ribosome_recyc_fac"/>
</dbReference>
<dbReference type="InterPro" id="IPR023584">
    <property type="entry name" value="Ribosome_recyc_fac_dom"/>
</dbReference>
<dbReference type="InterPro" id="IPR036191">
    <property type="entry name" value="RRF_sf"/>
</dbReference>
<dbReference type="NCBIfam" id="TIGR00496">
    <property type="entry name" value="frr"/>
    <property type="match status" value="1"/>
</dbReference>
<dbReference type="PANTHER" id="PTHR20982:SF3">
    <property type="entry name" value="MITOCHONDRIAL RIBOSOME RECYCLING FACTOR PSEUDO 1"/>
    <property type="match status" value="1"/>
</dbReference>
<dbReference type="PANTHER" id="PTHR20982">
    <property type="entry name" value="RIBOSOME RECYCLING FACTOR"/>
    <property type="match status" value="1"/>
</dbReference>
<dbReference type="Pfam" id="PF01765">
    <property type="entry name" value="RRF"/>
    <property type="match status" value="1"/>
</dbReference>
<dbReference type="SUPFAM" id="SSF55194">
    <property type="entry name" value="Ribosome recycling factor, RRF"/>
    <property type="match status" value="1"/>
</dbReference>
<feature type="chain" id="PRO_0000167518" description="Ribosome-recycling factor">
    <location>
        <begin position="1"/>
        <end position="185"/>
    </location>
</feature>
<keyword id="KW-0963">Cytoplasm</keyword>
<keyword id="KW-0648">Protein biosynthesis</keyword>
<keyword id="KW-1185">Reference proteome</keyword>
<sequence length="185" mass="20485">MINEIKKEAQERMGKTLEALGHAFAKIRTGRAHPSILDSVMVSYYGADTPLRQVANVTVEDSRTLALAVFDKSMIQAVEKAIMTSDLGLNPATAGTTIRVPMPALTEETRKGYTKQARAEAEQARVSVRNIRRDALAQLKDLQKEKEISEDEERRAGDDVQKLTDKFIGEIEKALEAKEADLMAV</sequence>
<reference key="1">
    <citation type="journal article" date="1999" name="J. Bacteriol.">
        <title>Molecular cloning, sequencing, purification, and characterization of Pseudomonas aeruginosa ribosome recycling factor.</title>
        <authorList>
            <person name="Ohnishi M."/>
            <person name="Janosi L."/>
            <person name="Shuda M."/>
            <person name="Matsumoto H."/>
            <person name="Hayashi T."/>
            <person name="Terawaki Y."/>
            <person name="Kaji A."/>
        </authorList>
    </citation>
    <scope>NUCLEOTIDE SEQUENCE [GENOMIC DNA]</scope>
    <scope>FUNCTION</scope>
    <source>
        <strain>ATCC 15692 / DSM 22644 / CIP 104116 / JCM 14847 / LMG 12228 / 1C / PRS 101 / PAO1</strain>
    </source>
</reference>
<reference key="2">
    <citation type="journal article" date="2000" name="Nature">
        <title>Complete genome sequence of Pseudomonas aeruginosa PAO1, an opportunistic pathogen.</title>
        <authorList>
            <person name="Stover C.K."/>
            <person name="Pham X.-Q.T."/>
            <person name="Erwin A.L."/>
            <person name="Mizoguchi S.D."/>
            <person name="Warrener P."/>
            <person name="Hickey M.J."/>
            <person name="Brinkman F.S.L."/>
            <person name="Hufnagle W.O."/>
            <person name="Kowalik D.J."/>
            <person name="Lagrou M."/>
            <person name="Garber R.L."/>
            <person name="Goltry L."/>
            <person name="Tolentino E."/>
            <person name="Westbrock-Wadman S."/>
            <person name="Yuan Y."/>
            <person name="Brody L.L."/>
            <person name="Coulter S.N."/>
            <person name="Folger K.R."/>
            <person name="Kas A."/>
            <person name="Larbig K."/>
            <person name="Lim R.M."/>
            <person name="Smith K.A."/>
            <person name="Spencer D.H."/>
            <person name="Wong G.K.-S."/>
            <person name="Wu Z."/>
            <person name="Paulsen I.T."/>
            <person name="Reizer J."/>
            <person name="Saier M.H. Jr."/>
            <person name="Hancock R.E.W."/>
            <person name="Lory S."/>
            <person name="Olson M.V."/>
        </authorList>
    </citation>
    <scope>NUCLEOTIDE SEQUENCE [LARGE SCALE GENOMIC DNA]</scope>
    <source>
        <strain>ATCC 15692 / DSM 22644 / CIP 104116 / JCM 14847 / LMG 12228 / 1C / PRS 101 / PAO1</strain>
    </source>
</reference>
<organism>
    <name type="scientific">Pseudomonas aeruginosa (strain ATCC 15692 / DSM 22644 / CIP 104116 / JCM 14847 / LMG 12228 / 1C / PRS 101 / PAO1)</name>
    <dbReference type="NCBI Taxonomy" id="208964"/>
    <lineage>
        <taxon>Bacteria</taxon>
        <taxon>Pseudomonadati</taxon>
        <taxon>Pseudomonadota</taxon>
        <taxon>Gammaproteobacteria</taxon>
        <taxon>Pseudomonadales</taxon>
        <taxon>Pseudomonadaceae</taxon>
        <taxon>Pseudomonas</taxon>
    </lineage>
</organism>
<evidence type="ECO:0000255" key="1">
    <source>
        <dbReference type="HAMAP-Rule" id="MF_00040"/>
    </source>
</evidence>
<evidence type="ECO:0000269" key="2">
    <source>
    </source>
</evidence>
<gene>
    <name evidence="1" type="primary">frr</name>
    <name type="ordered locus">PA3653</name>
</gene>